<proteinExistence type="uncertain"/>
<gene>
    <name type="primary">CRRSP27</name>
    <name type="ordered locus">At3g21980</name>
    <name type="ORF">MZN24.15</name>
</gene>
<evidence type="ECO:0000255" key="1"/>
<evidence type="ECO:0000255" key="2">
    <source>
        <dbReference type="PROSITE-ProRule" id="PRU00806"/>
    </source>
</evidence>
<evidence type="ECO:0000305" key="3"/>
<reference key="1">
    <citation type="journal article" date="2000" name="DNA Res.">
        <title>Structural analysis of Arabidopsis thaliana chromosome 3. I. Sequence features of the regions of 4,504,864 bp covered by sixty P1 and TAC clones.</title>
        <authorList>
            <person name="Sato S."/>
            <person name="Nakamura Y."/>
            <person name="Kaneko T."/>
            <person name="Katoh T."/>
            <person name="Asamizu E."/>
            <person name="Tabata S."/>
        </authorList>
    </citation>
    <scope>NUCLEOTIDE SEQUENCE [LARGE SCALE GENOMIC DNA]</scope>
    <source>
        <strain>cv. Columbia</strain>
    </source>
</reference>
<reference key="2">
    <citation type="journal article" date="2017" name="Plant J.">
        <title>Araport11: a complete reannotation of the Arabidopsis thaliana reference genome.</title>
        <authorList>
            <person name="Cheng C.Y."/>
            <person name="Krishnakumar V."/>
            <person name="Chan A.P."/>
            <person name="Thibaud-Nissen F."/>
            <person name="Schobel S."/>
            <person name="Town C.D."/>
        </authorList>
    </citation>
    <scope>GENOME REANNOTATION</scope>
    <source>
        <strain>cv. Columbia</strain>
    </source>
</reference>
<reference key="3">
    <citation type="journal article" date="2001" name="Plant Physiol.">
        <title>A superfamily of proteins with novel cysteine-rich repeats.</title>
        <authorList>
            <person name="Chen Z."/>
        </authorList>
    </citation>
    <scope>GENE FAMILY ORGANIZATION</scope>
    <scope>NOMENCLATURE</scope>
</reference>
<comment type="subcellular location">
    <subcellularLocation>
        <location evidence="3">Secreted</location>
    </subcellularLocation>
</comment>
<comment type="similarity">
    <text evidence="3">Belongs to the cysteine-rich repeat secretory protein family.</text>
</comment>
<comment type="caution">
    <text evidence="3">Lacks the Cys (here Ser-215), present in the DUF26 domain, which is one of the conserved features of the cysteine-rich repeat secretory protein family.</text>
</comment>
<comment type="caution">
    <text evidence="3">Could be the product of a pseudogene.</text>
</comment>
<comment type="sequence caution" evidence="3">
    <conflict type="erroneous gene model prediction">
        <sequence resource="EMBL-CDS" id="AEE76574"/>
    </conflict>
</comment>
<comment type="sequence caution" evidence="3">
    <conflict type="erroneous gene model prediction">
        <sequence resource="EMBL-CDS" id="BAB01380"/>
    </conflict>
</comment>
<comment type="sequence caution" evidence="3">
    <conflict type="frameshift">
        <sequence resource="EMBL-CDS" id="BAB01380"/>
    </conflict>
</comment>
<keyword id="KW-1185">Reference proteome</keyword>
<keyword id="KW-0677">Repeat</keyword>
<keyword id="KW-0964">Secreted</keyword>
<keyword id="KW-0732">Signal</keyword>
<dbReference type="EMBL" id="AB028622">
    <property type="protein sequence ID" value="BAB01380.1"/>
    <property type="status" value="ALT_SEQ"/>
    <property type="molecule type" value="Genomic_DNA"/>
</dbReference>
<dbReference type="EMBL" id="CP002686">
    <property type="protein sequence ID" value="AEE76574.1"/>
    <property type="status" value="ALT_SEQ"/>
    <property type="molecule type" value="Genomic_DNA"/>
</dbReference>
<dbReference type="RefSeq" id="NP_188836.1">
    <property type="nucleotide sequence ID" value="NM_113094.2"/>
</dbReference>
<dbReference type="SMR" id="Q9LRL0"/>
<dbReference type="ProteomicsDB" id="222651"/>
<dbReference type="GeneID" id="821757"/>
<dbReference type="KEGG" id="ath:AT3G21980"/>
<dbReference type="Araport" id="AT3G21980"/>
<dbReference type="TAIR" id="AT3G21980"/>
<dbReference type="InParanoid" id="Q9LRL0"/>
<dbReference type="OrthoDB" id="1038487at2759"/>
<dbReference type="Proteomes" id="UP000006548">
    <property type="component" value="Chromosome 3"/>
</dbReference>
<dbReference type="ExpressionAtlas" id="Q9LRL0">
    <property type="expression patterns" value="baseline"/>
</dbReference>
<dbReference type="GO" id="GO:0005576">
    <property type="term" value="C:extracellular region"/>
    <property type="evidence" value="ECO:0007669"/>
    <property type="project" value="UniProtKB-SubCell"/>
</dbReference>
<dbReference type="CDD" id="cd23509">
    <property type="entry name" value="Gnk2-like"/>
    <property type="match status" value="2"/>
</dbReference>
<dbReference type="Gene3D" id="3.30.430.20">
    <property type="entry name" value="Gnk2 domain, C-X8-C-X2-C motif"/>
    <property type="match status" value="2"/>
</dbReference>
<dbReference type="InterPro" id="IPR050581">
    <property type="entry name" value="CRR_secretory_protein"/>
</dbReference>
<dbReference type="InterPro" id="IPR002902">
    <property type="entry name" value="GNK2"/>
</dbReference>
<dbReference type="InterPro" id="IPR038408">
    <property type="entry name" value="GNK2_sf"/>
</dbReference>
<dbReference type="PANTHER" id="PTHR32411:SF54">
    <property type="entry name" value="CYSTEINE-RICH REPEAT SECRETORY PROTEIN 29-RELATED"/>
    <property type="match status" value="1"/>
</dbReference>
<dbReference type="PANTHER" id="PTHR32411">
    <property type="entry name" value="CYSTEINE-RICH REPEAT SECRETORY PROTEIN 38-RELATED"/>
    <property type="match status" value="1"/>
</dbReference>
<dbReference type="Pfam" id="PF01657">
    <property type="entry name" value="Stress-antifung"/>
    <property type="match status" value="2"/>
</dbReference>
<dbReference type="PROSITE" id="PS51473">
    <property type="entry name" value="GNK2"/>
    <property type="match status" value="2"/>
</dbReference>
<feature type="signal peptide" evidence="1">
    <location>
        <begin position="1"/>
        <end position="26"/>
    </location>
</feature>
<feature type="chain" id="PRO_0000296155" description="Putative cysteine-rich repeat secretory protein 27">
    <location>
        <begin position="27"/>
        <end position="255"/>
    </location>
</feature>
<feature type="domain" description="Gnk2-homologous 1" evidence="2">
    <location>
        <begin position="33"/>
        <end position="135"/>
    </location>
</feature>
<feature type="domain" description="Gnk2-homologous 2" evidence="2">
    <location>
        <begin position="141"/>
        <end position="252"/>
    </location>
</feature>
<sequence length="255" mass="28776">MISKFGSVHILAVVAIQLLIIPSVSSLNLTNAYLHHKCNNTEGKYSHGSAFEKYINLALRAIDSDNYLNGFAYIERGEDPNKVFVMYQCRGDSYGSKCKSCISAAISGLRRRCPKSKGAVIWYDQCLFEISTINSFNKIDYENDFYLSNPNDVNDKELFNKETSALLEELTNKATDKNNMIGNKFVLYAAGDKRIGTKNVYAMVQCTKDLVTTTSAACFEWIFKMFSKCCEGKQGGRVLGTSCNFRYELYPFLRN</sequence>
<accession>Q9LRL0</accession>
<accession>F4IYX2</accession>
<organism>
    <name type="scientific">Arabidopsis thaliana</name>
    <name type="common">Mouse-ear cress</name>
    <dbReference type="NCBI Taxonomy" id="3702"/>
    <lineage>
        <taxon>Eukaryota</taxon>
        <taxon>Viridiplantae</taxon>
        <taxon>Streptophyta</taxon>
        <taxon>Embryophyta</taxon>
        <taxon>Tracheophyta</taxon>
        <taxon>Spermatophyta</taxon>
        <taxon>Magnoliopsida</taxon>
        <taxon>eudicotyledons</taxon>
        <taxon>Gunneridae</taxon>
        <taxon>Pentapetalae</taxon>
        <taxon>rosids</taxon>
        <taxon>malvids</taxon>
        <taxon>Brassicales</taxon>
        <taxon>Brassicaceae</taxon>
        <taxon>Camelineae</taxon>
        <taxon>Arabidopsis</taxon>
    </lineage>
</organism>
<protein>
    <recommendedName>
        <fullName>Putative cysteine-rich repeat secretory protein 27</fullName>
    </recommendedName>
</protein>
<name>CRR27_ARATH</name>